<accession>Q8K4R9</accession>
<accession>Q6ZQL3</accession>
<accession>Q80VS7</accession>
<accession>Q8BUC8</accession>
<accession>Q8BZ79</accession>
<sequence>MLVSRFASRFRKDSSTEMVRTNLAHRKSLSQKENRHRVYERNRHFGLKDVNIPLEGRELGNIHETSQDLSPEKASSKTRSVKMVLSDQRKQLLQKYKEEKQLQKLKEQREKAKRGVFKVGLYRPAAPGFLVTDQRGAKAEPEKAFPHTGRITRSKTKEYMEQTKIGSRNVPKATQSDQRQTSEKQPLDRERKVMQPVLFTSGKGTESAATQRAKLMARTVSSTTRKPVTRATNEKGSERMRPSGGRPAKKPEGKPDKVIPSKVERDEKHLDSQTRETSEMGPLGVFREVESLPATAPAQGKERKSFAPKHCVFQPPCGLKSYQVAPLSPRSANAFLTPNCDWNQLRPEVFSTTTQDKANEILVQQGLESLTDRSKEHVLNQKGASTSDSNHASVKGVPCSEGSEGQTSQPPHDVPYFRKILQSETDRLTSHCLEWEGKLDLDISDEAKGLIRTTVGQTRLLIKERFRQFEGLVDNCEYKRGEKETTCTDLDGFWDMVSFQVDDVNQKFNNLIKLEASGWKDSNNPSKKVLRKKIVPGRTSKAKQDDDGRAAARSRLAAIKNAMKGRPQQEVQAHAAAPETTKEVDKIVFDAGFFRIESPVKSFSVLSSERRSQRFGTPLSASKVVPEGRAAGDLLRQKMPLKKPDPQSSKSEHVDRTFSDGLESRCHVEDTPCPGEQDSSDIEHDVNKINVKMDCFSVETNLPLPAGDANTNQKEAISAVEGASTAVTSQDLLMSNPETNTSSQSNTSQEEAEASQSVLLHKSLTSECHLLEPPGLSCTSPCTREETRQPDRSRQFSFGGDLILFSPL</sequence>
<name>DLGP5_MOUSE</name>
<protein>
    <recommendedName>
        <fullName>Disks large-associated protein 5</fullName>
        <shortName>DAP-5</shortName>
    </recommendedName>
    <alternativeName>
        <fullName>Discs large homolog 7</fullName>
    </alternativeName>
    <alternativeName>
        <fullName>Disks large-associated protein DLG7</fullName>
    </alternativeName>
    <alternativeName>
        <fullName>Hepatoma up-regulated protein homolog</fullName>
        <shortName>HURP</shortName>
    </alternativeName>
</protein>
<reference evidence="8 11" key="1">
    <citation type="journal article" date="2003" name="Oncogene">
        <title>Identification of a novel cell cycle regulated gene, HURP, overexpressed in human hepatocellular carcinoma.</title>
        <authorList>
            <person name="Tsou A.-P."/>
            <person name="Yang C.-W."/>
            <person name="Huang C.-Y.F."/>
            <person name="Yu R.C.-T."/>
            <person name="Lee Y.-C.G."/>
            <person name="Chang C.-W."/>
            <person name="Chen B.-R."/>
            <person name="Chung Y.-F."/>
            <person name="Fann M.-J."/>
            <person name="Chi C.-W."/>
            <person name="Chiu J.-H."/>
            <person name="Chou C.-K."/>
        </authorList>
    </citation>
    <scope>NUCLEOTIDE SEQUENCE [MRNA] (ISOFORM 1)</scope>
    <scope>TISSUE SPECIFICITY</scope>
</reference>
<reference key="2">
    <citation type="journal article" date="2005" name="Science">
        <title>The transcriptional landscape of the mammalian genome.</title>
        <authorList>
            <person name="Carninci P."/>
            <person name="Kasukawa T."/>
            <person name="Katayama S."/>
            <person name="Gough J."/>
            <person name="Frith M.C."/>
            <person name="Maeda N."/>
            <person name="Oyama R."/>
            <person name="Ravasi T."/>
            <person name="Lenhard B."/>
            <person name="Wells C."/>
            <person name="Kodzius R."/>
            <person name="Shimokawa K."/>
            <person name="Bajic V.B."/>
            <person name="Brenner S.E."/>
            <person name="Batalov S."/>
            <person name="Forrest A.R."/>
            <person name="Zavolan M."/>
            <person name="Davis M.J."/>
            <person name="Wilming L.G."/>
            <person name="Aidinis V."/>
            <person name="Allen J.E."/>
            <person name="Ambesi-Impiombato A."/>
            <person name="Apweiler R."/>
            <person name="Aturaliya R.N."/>
            <person name="Bailey T.L."/>
            <person name="Bansal M."/>
            <person name="Baxter L."/>
            <person name="Beisel K.W."/>
            <person name="Bersano T."/>
            <person name="Bono H."/>
            <person name="Chalk A.M."/>
            <person name="Chiu K.P."/>
            <person name="Choudhary V."/>
            <person name="Christoffels A."/>
            <person name="Clutterbuck D.R."/>
            <person name="Crowe M.L."/>
            <person name="Dalla E."/>
            <person name="Dalrymple B.P."/>
            <person name="de Bono B."/>
            <person name="Della Gatta G."/>
            <person name="di Bernardo D."/>
            <person name="Down T."/>
            <person name="Engstrom P."/>
            <person name="Fagiolini M."/>
            <person name="Faulkner G."/>
            <person name="Fletcher C.F."/>
            <person name="Fukushima T."/>
            <person name="Furuno M."/>
            <person name="Futaki S."/>
            <person name="Gariboldi M."/>
            <person name="Georgii-Hemming P."/>
            <person name="Gingeras T.R."/>
            <person name="Gojobori T."/>
            <person name="Green R.E."/>
            <person name="Gustincich S."/>
            <person name="Harbers M."/>
            <person name="Hayashi Y."/>
            <person name="Hensch T.K."/>
            <person name="Hirokawa N."/>
            <person name="Hill D."/>
            <person name="Huminiecki L."/>
            <person name="Iacono M."/>
            <person name="Ikeo K."/>
            <person name="Iwama A."/>
            <person name="Ishikawa T."/>
            <person name="Jakt M."/>
            <person name="Kanapin A."/>
            <person name="Katoh M."/>
            <person name="Kawasawa Y."/>
            <person name="Kelso J."/>
            <person name="Kitamura H."/>
            <person name="Kitano H."/>
            <person name="Kollias G."/>
            <person name="Krishnan S.P."/>
            <person name="Kruger A."/>
            <person name="Kummerfeld S.K."/>
            <person name="Kurochkin I.V."/>
            <person name="Lareau L.F."/>
            <person name="Lazarevic D."/>
            <person name="Lipovich L."/>
            <person name="Liu J."/>
            <person name="Liuni S."/>
            <person name="McWilliam S."/>
            <person name="Madan Babu M."/>
            <person name="Madera M."/>
            <person name="Marchionni L."/>
            <person name="Matsuda H."/>
            <person name="Matsuzawa S."/>
            <person name="Miki H."/>
            <person name="Mignone F."/>
            <person name="Miyake S."/>
            <person name="Morris K."/>
            <person name="Mottagui-Tabar S."/>
            <person name="Mulder N."/>
            <person name="Nakano N."/>
            <person name="Nakauchi H."/>
            <person name="Ng P."/>
            <person name="Nilsson R."/>
            <person name="Nishiguchi S."/>
            <person name="Nishikawa S."/>
            <person name="Nori F."/>
            <person name="Ohara O."/>
            <person name="Okazaki Y."/>
            <person name="Orlando V."/>
            <person name="Pang K.C."/>
            <person name="Pavan W.J."/>
            <person name="Pavesi G."/>
            <person name="Pesole G."/>
            <person name="Petrovsky N."/>
            <person name="Piazza S."/>
            <person name="Reed J."/>
            <person name="Reid J.F."/>
            <person name="Ring B.Z."/>
            <person name="Ringwald M."/>
            <person name="Rost B."/>
            <person name="Ruan Y."/>
            <person name="Salzberg S.L."/>
            <person name="Sandelin A."/>
            <person name="Schneider C."/>
            <person name="Schoenbach C."/>
            <person name="Sekiguchi K."/>
            <person name="Semple C.A."/>
            <person name="Seno S."/>
            <person name="Sessa L."/>
            <person name="Sheng Y."/>
            <person name="Shibata Y."/>
            <person name="Shimada H."/>
            <person name="Shimada K."/>
            <person name="Silva D."/>
            <person name="Sinclair B."/>
            <person name="Sperling S."/>
            <person name="Stupka E."/>
            <person name="Sugiura K."/>
            <person name="Sultana R."/>
            <person name="Takenaka Y."/>
            <person name="Taki K."/>
            <person name="Tammoja K."/>
            <person name="Tan S.L."/>
            <person name="Tang S."/>
            <person name="Taylor M.S."/>
            <person name="Tegner J."/>
            <person name="Teichmann S.A."/>
            <person name="Ueda H.R."/>
            <person name="van Nimwegen E."/>
            <person name="Verardo R."/>
            <person name="Wei C.L."/>
            <person name="Yagi K."/>
            <person name="Yamanishi H."/>
            <person name="Zabarovsky E."/>
            <person name="Zhu S."/>
            <person name="Zimmer A."/>
            <person name="Hide W."/>
            <person name="Bult C."/>
            <person name="Grimmond S.M."/>
            <person name="Teasdale R.D."/>
            <person name="Liu E.T."/>
            <person name="Brusic V."/>
            <person name="Quackenbush J."/>
            <person name="Wahlestedt C."/>
            <person name="Mattick J.S."/>
            <person name="Hume D.A."/>
            <person name="Kai C."/>
            <person name="Sasaki D."/>
            <person name="Tomaru Y."/>
            <person name="Fukuda S."/>
            <person name="Kanamori-Katayama M."/>
            <person name="Suzuki M."/>
            <person name="Aoki J."/>
            <person name="Arakawa T."/>
            <person name="Iida J."/>
            <person name="Imamura K."/>
            <person name="Itoh M."/>
            <person name="Kato T."/>
            <person name="Kawaji H."/>
            <person name="Kawagashira N."/>
            <person name="Kawashima T."/>
            <person name="Kojima M."/>
            <person name="Kondo S."/>
            <person name="Konno H."/>
            <person name="Nakano K."/>
            <person name="Ninomiya N."/>
            <person name="Nishio T."/>
            <person name="Okada M."/>
            <person name="Plessy C."/>
            <person name="Shibata K."/>
            <person name="Shiraki T."/>
            <person name="Suzuki S."/>
            <person name="Tagami M."/>
            <person name="Waki K."/>
            <person name="Watahiki A."/>
            <person name="Okamura-Oho Y."/>
            <person name="Suzuki H."/>
            <person name="Kawai J."/>
            <person name="Hayashizaki Y."/>
        </authorList>
    </citation>
    <scope>NUCLEOTIDE SEQUENCE [LARGE SCALE MRNA] (ISOFORMS 1 AND 3)</scope>
    <source>
        <strain>C57BL/6J</strain>
        <tissue>Bone</tissue>
        <tissue>Heart</tissue>
    </source>
</reference>
<reference evidence="8 12" key="3">
    <citation type="journal article" date="2003" name="DNA Res.">
        <title>Prediction of the coding sequences of mouse homologues of KIAA gene: III. The complete nucleotide sequences of 500 mouse KIAA-homologous cDNAs identified by screening of terminal sequences of cDNA clones randomly sampled from size-fractionated libraries.</title>
        <authorList>
            <person name="Okazaki N."/>
            <person name="Kikuno R."/>
            <person name="Ohara R."/>
            <person name="Inamoto S."/>
            <person name="Koseki H."/>
            <person name="Hiraoka S."/>
            <person name="Saga Y."/>
            <person name="Nagase T."/>
            <person name="Ohara O."/>
            <person name="Koga H."/>
        </authorList>
    </citation>
    <scope>NUCLEOTIDE SEQUENCE [LARGE SCALE MRNA] (ISOFORM 2)</scope>
    <source>
        <tissue evidence="12">Embryonic tail</tissue>
    </source>
</reference>
<reference evidence="8 10" key="4">
    <citation type="journal article" date="2004" name="Genome Res.">
        <title>The status, quality, and expansion of the NIH full-length cDNA project: the Mammalian Gene Collection (MGC).</title>
        <authorList>
            <consortium name="The MGC Project Team"/>
        </authorList>
    </citation>
    <scope>NUCLEOTIDE SEQUENCE [LARGE SCALE MRNA] (ISOFORM 1)</scope>
    <source>
        <strain evidence="10">C57BL/6J</strain>
        <tissue evidence="10">Brain</tissue>
        <tissue evidence="9">Mammary gland</tissue>
    </source>
</reference>
<reference key="5">
    <citation type="journal article" date="2007" name="Proc. Natl. Acad. Sci. U.S.A.">
        <title>Large-scale phosphorylation analysis of mouse liver.</title>
        <authorList>
            <person name="Villen J."/>
            <person name="Beausoleil S.A."/>
            <person name="Gerber S.A."/>
            <person name="Gygi S.P."/>
        </authorList>
    </citation>
    <scope>PHOSPHORYLATION [LARGE SCALE ANALYSIS] AT SER-328</scope>
    <scope>IDENTIFICATION BY MASS SPECTROMETRY [LARGE SCALE ANALYSIS]</scope>
    <source>
        <tissue>Liver</tissue>
    </source>
</reference>
<reference key="6">
    <citation type="journal article" date="2010" name="Cell">
        <title>A tissue-specific atlas of mouse protein phosphorylation and expression.</title>
        <authorList>
            <person name="Huttlin E.L."/>
            <person name="Jedrychowski M.P."/>
            <person name="Elias J.E."/>
            <person name="Goswami T."/>
            <person name="Rad R."/>
            <person name="Beausoleil S.A."/>
            <person name="Villen J."/>
            <person name="Haas W."/>
            <person name="Sowa M.E."/>
            <person name="Gygi S.P."/>
        </authorList>
    </citation>
    <scope>PHOSPHORYLATION [LARGE SCALE ANALYSIS] AT SER-70 AND SER-328</scope>
    <scope>IDENTIFICATION BY MASS SPECTROMETRY [LARGE SCALE ANALYSIS]</scope>
    <source>
        <tissue>Liver</tissue>
        <tissue>Lung</tissue>
        <tissue>Spleen</tissue>
        <tissue>Testis</tissue>
    </source>
</reference>
<keyword id="KW-0025">Alternative splicing</keyword>
<keyword id="KW-0131">Cell cycle</keyword>
<keyword id="KW-0175">Coiled coil</keyword>
<keyword id="KW-0963">Cytoplasm</keyword>
<keyword id="KW-0206">Cytoskeleton</keyword>
<keyword id="KW-0539">Nucleus</keyword>
<keyword id="KW-0597">Phosphoprotein</keyword>
<keyword id="KW-1185">Reference proteome</keyword>
<keyword id="KW-0832">Ubl conjugation</keyword>
<organism>
    <name type="scientific">Mus musculus</name>
    <name type="common">Mouse</name>
    <dbReference type="NCBI Taxonomy" id="10090"/>
    <lineage>
        <taxon>Eukaryota</taxon>
        <taxon>Metazoa</taxon>
        <taxon>Chordata</taxon>
        <taxon>Craniata</taxon>
        <taxon>Vertebrata</taxon>
        <taxon>Euteleostomi</taxon>
        <taxon>Mammalia</taxon>
        <taxon>Eutheria</taxon>
        <taxon>Euarchontoglires</taxon>
        <taxon>Glires</taxon>
        <taxon>Rodentia</taxon>
        <taxon>Myomorpha</taxon>
        <taxon>Muroidea</taxon>
        <taxon>Muridae</taxon>
        <taxon>Murinae</taxon>
        <taxon>Mus</taxon>
        <taxon>Mus</taxon>
    </lineage>
</organism>
<gene>
    <name type="primary">Dlgap5</name>
    <name type="synonym">Dlg7</name>
    <name type="synonym">Kiaa0008</name>
</gene>
<feature type="chain" id="PRO_0000174300" description="Disks large-associated protein 5">
    <location>
        <begin position="1"/>
        <end position="808"/>
    </location>
</feature>
<feature type="region of interest" description="Disordered" evidence="4">
    <location>
        <begin position="134"/>
        <end position="282"/>
    </location>
</feature>
<feature type="region of interest" description="Disordered" evidence="4">
    <location>
        <begin position="377"/>
        <end position="413"/>
    </location>
</feature>
<feature type="region of interest" description="Disordered" evidence="4">
    <location>
        <begin position="629"/>
        <end position="654"/>
    </location>
</feature>
<feature type="region of interest" description="Disordered" evidence="4">
    <location>
        <begin position="735"/>
        <end position="757"/>
    </location>
</feature>
<feature type="coiled-coil region" evidence="3">
    <location>
        <begin position="88"/>
        <end position="119"/>
    </location>
</feature>
<feature type="compositionally biased region" description="Basic and acidic residues" evidence="4">
    <location>
        <begin position="135"/>
        <end position="145"/>
    </location>
</feature>
<feature type="compositionally biased region" description="Basic and acidic residues" evidence="4">
    <location>
        <begin position="180"/>
        <end position="193"/>
    </location>
</feature>
<feature type="compositionally biased region" description="Basic and acidic residues" evidence="4">
    <location>
        <begin position="232"/>
        <end position="241"/>
    </location>
</feature>
<feature type="compositionally biased region" description="Basic and acidic residues" evidence="4">
    <location>
        <begin position="249"/>
        <end position="278"/>
    </location>
</feature>
<feature type="compositionally biased region" description="Polar residues" evidence="4">
    <location>
        <begin position="382"/>
        <end position="392"/>
    </location>
</feature>
<feature type="compositionally biased region" description="Basic and acidic residues" evidence="4">
    <location>
        <begin position="642"/>
        <end position="654"/>
    </location>
</feature>
<feature type="modified residue" description="Phosphoserine" evidence="2">
    <location>
        <position position="66"/>
    </location>
</feature>
<feature type="modified residue" description="Phosphoserine" evidence="14">
    <location>
        <position position="70"/>
    </location>
</feature>
<feature type="modified residue" description="Phosphoserine" evidence="2">
    <location>
        <position position="201"/>
    </location>
</feature>
<feature type="modified residue" description="Phosphoserine" evidence="13 14">
    <location>
        <position position="328"/>
    </location>
</feature>
<feature type="modified residue" description="Phosphothreonine" evidence="2">
    <location>
        <position position="337"/>
    </location>
</feature>
<feature type="modified residue" description="Phosphothreonine" evidence="2">
    <location>
        <position position="386"/>
    </location>
</feature>
<feature type="modified residue" description="Phosphoserine" evidence="2">
    <location>
        <position position="598"/>
    </location>
</feature>
<feature type="modified residue" description="Phosphoserine; by AURKA" evidence="2">
    <location>
        <position position="607"/>
    </location>
</feature>
<feature type="modified residue" description="Phosphoserine" evidence="2">
    <location>
        <position position="612"/>
    </location>
</feature>
<feature type="modified residue" description="Phosphothreonine" evidence="2">
    <location>
        <position position="617"/>
    </location>
</feature>
<feature type="modified residue" description="Phosphoserine" evidence="2">
    <location>
        <position position="620"/>
    </location>
</feature>
<feature type="modified residue" description="Phosphothreonine" evidence="2">
    <location>
        <position position="728"/>
    </location>
</feature>
<feature type="modified residue" description="Phosphoserine" evidence="2">
    <location>
        <position position="743"/>
    </location>
</feature>
<feature type="modified residue" description="Phosphoserine; by AURKA" evidence="2">
    <location>
        <position position="797"/>
    </location>
</feature>
<feature type="modified residue" description="Phosphoserine" evidence="2">
    <location>
        <position position="806"/>
    </location>
</feature>
<feature type="splice variant" id="VSP_051825" description="In isoform 3." evidence="7">
    <original>LSSERRSQRFGTPLSASKVVPE</original>
    <variation>CSFAETEERCLGQLGAGVNGGE</variation>
    <location>
        <begin position="606"/>
        <end position="627"/>
    </location>
</feature>
<feature type="splice variant" id="VSP_051826" description="In isoform 3." evidence="7">
    <location>
        <begin position="628"/>
        <end position="808"/>
    </location>
</feature>
<feature type="splice variant" id="VSP_051827" description="In isoform 2." evidence="6">
    <original>V</original>
    <variation>G</variation>
    <location>
        <position position="758"/>
    </location>
</feature>
<feature type="splice variant" id="VSP_051828" description="In isoform 2." evidence="6">
    <location>
        <begin position="759"/>
        <end position="808"/>
    </location>
</feature>
<feature type="sequence conflict" description="In Ref. 3; BAC97842." evidence="8" ref="3">
    <original>I</original>
    <variation>M</variation>
    <location>
        <position position="165"/>
    </location>
</feature>
<feature type="sequence conflict" description="In Ref. 1; BAB97377." evidence="8" ref="1">
    <original>P</original>
    <variation>L</variation>
    <location>
        <position position="282"/>
    </location>
</feature>
<feature type="sequence conflict" description="In Ref. 4; AAH43924." evidence="8" ref="4">
    <original>N</original>
    <variation>D</variation>
    <location>
        <position position="359"/>
    </location>
</feature>
<feature type="sequence conflict" description="In Ref. 2; BAC29405/BAC39560 and 4; AAH58087." evidence="8" ref="2 4">
    <original>G</original>
    <variation>A</variation>
    <location>
        <position position="402"/>
    </location>
</feature>
<feature type="sequence conflict" description="In Ref. 2; BAC29405/BAC39560 and 4; AAH58087." evidence="8" ref="2 4">
    <original>L</original>
    <variation>Q</variation>
    <location>
        <position position="433"/>
    </location>
</feature>
<feature type="sequence conflict" description="In Ref. 2; BAC29405." evidence="8" ref="2">
    <original>L</original>
    <variation>Q</variation>
    <location>
        <position position="439"/>
    </location>
</feature>
<feature type="sequence conflict" description="In Ref. 2; BAC29405/BAC39560 and 4; AAH58087." evidence="8" ref="2 4">
    <original>S</original>
    <variation>P</variation>
    <location>
        <position position="444"/>
    </location>
</feature>
<feature type="sequence conflict" description="In Ref. 3; BAC97842 and 4; AAH43924." evidence="8" ref="3 4">
    <original>D</original>
    <variation>E</variation>
    <location>
        <position position="546"/>
    </location>
</feature>
<feature type="sequence conflict" description="In Ref. 2; BAC29405/BAC39560 and 4; AAH58087." evidence="8" ref="2 4">
    <original>T</original>
    <variation>N</variation>
    <location>
        <position position="580"/>
    </location>
</feature>
<feature type="sequence conflict" description="In Ref. 3; BAC97842 and 4; AAH43924." evidence="8" ref="3 4">
    <original>M</original>
    <variation>N</variation>
    <location>
        <position position="639"/>
    </location>
</feature>
<feature type="sequence conflict" description="In Ref. 2; BAC39560 and 4; AAH58087." evidence="8" ref="2 4">
    <original>T</original>
    <variation>S</variation>
    <location>
        <position position="725"/>
    </location>
</feature>
<feature type="sequence conflict" description="In Ref. 4; AAH43924." evidence="8" ref="4">
    <original>L</original>
    <variation>LRP</variation>
    <location>
        <position position="808"/>
    </location>
</feature>
<dbReference type="EMBL" id="AB076696">
    <property type="protein sequence ID" value="BAB97377.1"/>
    <property type="molecule type" value="mRNA"/>
</dbReference>
<dbReference type="EMBL" id="AK036384">
    <property type="protein sequence ID" value="BAC29405.1"/>
    <property type="molecule type" value="mRNA"/>
</dbReference>
<dbReference type="EMBL" id="AK085882">
    <property type="protein sequence ID" value="BAC39560.1"/>
    <property type="molecule type" value="mRNA"/>
</dbReference>
<dbReference type="EMBL" id="AK129032">
    <property type="protein sequence ID" value="BAC97842.1"/>
    <property type="status" value="ALT_INIT"/>
    <property type="molecule type" value="mRNA"/>
</dbReference>
<dbReference type="EMBL" id="BC043924">
    <property type="protein sequence ID" value="AAH43924.1"/>
    <property type="molecule type" value="mRNA"/>
</dbReference>
<dbReference type="EMBL" id="BC058087">
    <property type="protein sequence ID" value="AAH58087.1"/>
    <property type="molecule type" value="mRNA"/>
</dbReference>
<dbReference type="CCDS" id="CCDS26987.1">
    <molecule id="Q8K4R9-1"/>
</dbReference>
<dbReference type="RefSeq" id="NP_653136.2">
    <property type="nucleotide sequence ID" value="NM_144553.2"/>
</dbReference>
<dbReference type="SMR" id="Q8K4R9"/>
<dbReference type="BioGRID" id="230090">
    <property type="interactions" value="2"/>
</dbReference>
<dbReference type="FunCoup" id="Q8K4R9">
    <property type="interactions" value="1056"/>
</dbReference>
<dbReference type="IntAct" id="Q8K4R9">
    <property type="interactions" value="2"/>
</dbReference>
<dbReference type="STRING" id="10090.ENSMUSP00000040416"/>
<dbReference type="iPTMnet" id="Q8K4R9"/>
<dbReference type="PhosphoSitePlus" id="Q8K4R9"/>
<dbReference type="jPOST" id="Q8K4R9"/>
<dbReference type="PaxDb" id="10090-ENSMUSP00000040416"/>
<dbReference type="PeptideAtlas" id="Q8K4R9"/>
<dbReference type="ProteomicsDB" id="277465">
    <molecule id="Q8K4R9-1"/>
</dbReference>
<dbReference type="ProteomicsDB" id="277466">
    <molecule id="Q8K4R9-2"/>
</dbReference>
<dbReference type="ProteomicsDB" id="277467">
    <molecule id="Q8K4R9-3"/>
</dbReference>
<dbReference type="Pumba" id="Q8K4R9"/>
<dbReference type="DNASU" id="218977"/>
<dbReference type="GeneID" id="218977"/>
<dbReference type="KEGG" id="mmu:218977"/>
<dbReference type="AGR" id="MGI:2183453"/>
<dbReference type="CTD" id="9787"/>
<dbReference type="MGI" id="MGI:2183453">
    <property type="gene designation" value="Dlgap5"/>
</dbReference>
<dbReference type="eggNOG" id="KOG3971">
    <property type="taxonomic scope" value="Eukaryota"/>
</dbReference>
<dbReference type="InParanoid" id="Q8K4R9"/>
<dbReference type="OrthoDB" id="10023951at2759"/>
<dbReference type="PhylomeDB" id="Q8K4R9"/>
<dbReference type="TreeFam" id="TF321382"/>
<dbReference type="BioGRID-ORCS" id="218977">
    <property type="hits" value="5 hits in 76 CRISPR screens"/>
</dbReference>
<dbReference type="CD-CODE" id="01CA17F3">
    <property type="entry name" value="Centrosome"/>
</dbReference>
<dbReference type="ChiTaRS" id="Dlgap5">
    <property type="organism name" value="mouse"/>
</dbReference>
<dbReference type="PRO" id="PR:Q8K4R9"/>
<dbReference type="Proteomes" id="UP000000589">
    <property type="component" value="Unplaced"/>
</dbReference>
<dbReference type="RNAct" id="Q8K4R9">
    <property type="molecule type" value="protein"/>
</dbReference>
<dbReference type="GO" id="GO:0005737">
    <property type="term" value="C:cytoplasm"/>
    <property type="evidence" value="ECO:0007669"/>
    <property type="project" value="UniProtKB-SubCell"/>
</dbReference>
<dbReference type="GO" id="GO:0005634">
    <property type="term" value="C:nucleus"/>
    <property type="evidence" value="ECO:0000250"/>
    <property type="project" value="UniProtKB"/>
</dbReference>
<dbReference type="GO" id="GO:0031616">
    <property type="term" value="C:spindle pole centrosome"/>
    <property type="evidence" value="ECO:0000250"/>
    <property type="project" value="UniProtKB"/>
</dbReference>
<dbReference type="GO" id="GO:0023052">
    <property type="term" value="P:signaling"/>
    <property type="evidence" value="ECO:0007669"/>
    <property type="project" value="InterPro"/>
</dbReference>
<dbReference type="InterPro" id="IPR005026">
    <property type="entry name" value="SAPAP"/>
</dbReference>
<dbReference type="PANTHER" id="PTHR12353:SF1">
    <property type="entry name" value="DISKS LARGE-ASSOCIATED PROTEIN 5"/>
    <property type="match status" value="1"/>
</dbReference>
<dbReference type="PANTHER" id="PTHR12353">
    <property type="entry name" value="DISKS LARGE-ASSOCIATED PROTEIN DAP SAP90/PSD-95-ASSOCIATED PROTEIN"/>
    <property type="match status" value="1"/>
</dbReference>
<dbReference type="Pfam" id="PF03359">
    <property type="entry name" value="GKAP"/>
    <property type="match status" value="1"/>
</dbReference>
<evidence type="ECO:0000250" key="1"/>
<evidence type="ECO:0000250" key="2">
    <source>
        <dbReference type="UniProtKB" id="Q15398"/>
    </source>
</evidence>
<evidence type="ECO:0000255" key="3"/>
<evidence type="ECO:0000256" key="4">
    <source>
        <dbReference type="SAM" id="MobiDB-lite"/>
    </source>
</evidence>
<evidence type="ECO:0000269" key="5">
    <source>
    </source>
</evidence>
<evidence type="ECO:0000303" key="6">
    <source>
    </source>
</evidence>
<evidence type="ECO:0000303" key="7">
    <source>
    </source>
</evidence>
<evidence type="ECO:0000305" key="8"/>
<evidence type="ECO:0000312" key="9">
    <source>
        <dbReference type="EMBL" id="AAH43924.1"/>
    </source>
</evidence>
<evidence type="ECO:0000312" key="10">
    <source>
        <dbReference type="EMBL" id="AAH58087.1"/>
    </source>
</evidence>
<evidence type="ECO:0000312" key="11">
    <source>
        <dbReference type="EMBL" id="BAB97377.1"/>
    </source>
</evidence>
<evidence type="ECO:0000312" key="12">
    <source>
        <dbReference type="EMBL" id="BAC97842.1"/>
    </source>
</evidence>
<evidence type="ECO:0007744" key="13">
    <source>
    </source>
</evidence>
<evidence type="ECO:0007744" key="14">
    <source>
    </source>
</evidence>
<proteinExistence type="evidence at protein level"/>
<comment type="function">
    <text evidence="2">Potential cell cycle regulator that may play a role in carcinogenesis of cancer cells. Mitotic phosphoprotein regulated by the ubiquitin-proteasome pathway. Key regulator of adherens junction integrity and differentiation that may be involved in CDH1-mediated adhesion and signaling in epithelial cells (By similarity).</text>
</comment>
<comment type="subunit">
    <text evidence="2">Interacts with CDC2. Interacts with the C-terminal proline-rich region of FBXO7. Recruited by FBXO7 to a SCF (SKP1-CUL1-F-box) protein complex in a CDC2/Cyclin B-phosphorylation dependent manner. Interacts with CDH1 (By similarity).</text>
</comment>
<comment type="subcellular location">
    <subcellularLocation>
        <location evidence="1">Nucleus</location>
    </subcellularLocation>
    <subcellularLocation>
        <location evidence="1">Cytoplasm</location>
    </subcellularLocation>
    <subcellularLocation>
        <location evidence="1">Cytoplasm</location>
        <location evidence="1">Cytoskeleton</location>
        <location evidence="1">Spindle</location>
    </subcellularLocation>
    <text evidence="1">Localizes to the spindle in mitotic cells. Colocalizes with CDH1 at sites of cell-cell contact in intestinal epithelial cells (By similarity).</text>
</comment>
<comment type="alternative products">
    <event type="alternative splicing"/>
    <isoform>
        <id>Q8K4R9-1</id>
        <name evidence="5">1</name>
        <sequence type="displayed"/>
    </isoform>
    <isoform>
        <id>Q8K4R9-2</id>
        <name evidence="8">2</name>
        <sequence type="described" ref="VSP_051827 VSP_051828"/>
    </isoform>
    <isoform>
        <id>Q8K4R9-3</id>
        <name evidence="8">3</name>
        <sequence type="described" ref="VSP_051825 VSP_051826"/>
    </isoform>
</comment>
<comment type="tissue specificity">
    <text evidence="5">Expressed at low levels in normal resting liver. Up-regulated in regenerating liver after partial hepatectomy.</text>
</comment>
<comment type="PTM">
    <text evidence="1">Ubiquitinated, leading to its degradation.</text>
</comment>
<comment type="PTM">
    <text evidence="2">Decreased phosphorylation levels are associated with the differentiation of intestinal epithelial cells.</text>
</comment>
<comment type="similarity">
    <text evidence="8">Belongs to the SAPAP family.</text>
</comment>
<comment type="sequence caution" evidence="8">
    <conflict type="erroneous initiation">
        <sequence resource="EMBL-CDS" id="BAC97842"/>
    </conflict>
    <text>Extended N-terminus.</text>
</comment>